<protein>
    <recommendedName>
        <fullName>Carboxylic acid transporter protein homolog</fullName>
    </recommendedName>
</protein>
<name>JEN1_YEAST</name>
<evidence type="ECO:0000255" key="1"/>
<evidence type="ECO:0000256" key="2">
    <source>
        <dbReference type="SAM" id="MobiDB-lite"/>
    </source>
</evidence>
<evidence type="ECO:0000269" key="3">
    <source>
    </source>
</evidence>
<evidence type="ECO:0000305" key="4"/>
<evidence type="ECO:0007744" key="5">
    <source>
    </source>
</evidence>
<evidence type="ECO:0007744" key="6">
    <source>
    </source>
</evidence>
<evidence type="ECO:0007744" key="7">
    <source>
    </source>
</evidence>
<accession>P36035</accession>
<accession>D6VWY6</accession>
<keyword id="KW-0007">Acetylation</keyword>
<keyword id="KW-1017">Isopeptide bond</keyword>
<keyword id="KW-0472">Membrane</keyword>
<keyword id="KW-0597">Phosphoprotein</keyword>
<keyword id="KW-1185">Reference proteome</keyword>
<keyword id="KW-0677">Repeat</keyword>
<keyword id="KW-0812">Transmembrane</keyword>
<keyword id="KW-1133">Transmembrane helix</keyword>
<keyword id="KW-0813">Transport</keyword>
<keyword id="KW-0832">Ubl conjugation</keyword>
<dbReference type="EMBL" id="U24155">
    <property type="protein sequence ID" value="AAB60291.1"/>
    <property type="molecule type" value="Genomic_DNA"/>
</dbReference>
<dbReference type="EMBL" id="X75951">
    <property type="protein sequence ID" value="CAA53556.1"/>
    <property type="molecule type" value="Genomic_DNA"/>
</dbReference>
<dbReference type="EMBL" id="Z28217">
    <property type="protein sequence ID" value="CAA82062.1"/>
    <property type="molecule type" value="Genomic_DNA"/>
</dbReference>
<dbReference type="EMBL" id="BK006944">
    <property type="protein sequence ID" value="DAA08952.1"/>
    <property type="molecule type" value="Genomic_DNA"/>
</dbReference>
<dbReference type="PIR" id="S38060">
    <property type="entry name" value="S38060"/>
</dbReference>
<dbReference type="RefSeq" id="NP_012705.1">
    <property type="nucleotide sequence ID" value="NM_001179782.1"/>
</dbReference>
<dbReference type="SMR" id="P36035"/>
<dbReference type="BioGRID" id="33948">
    <property type="interactions" value="46"/>
</dbReference>
<dbReference type="DIP" id="DIP-8064N"/>
<dbReference type="FunCoup" id="P36035">
    <property type="interactions" value="97"/>
</dbReference>
<dbReference type="STRING" id="4932.YKL217W"/>
<dbReference type="TCDB" id="2.A.1.12.2">
    <property type="family name" value="the major facilitator superfamily (mfs)"/>
</dbReference>
<dbReference type="iPTMnet" id="P36035"/>
<dbReference type="PaxDb" id="4932-YKL217W"/>
<dbReference type="PeptideAtlas" id="P36035"/>
<dbReference type="EnsemblFungi" id="YKL217W_mRNA">
    <property type="protein sequence ID" value="YKL217W"/>
    <property type="gene ID" value="YKL217W"/>
</dbReference>
<dbReference type="GeneID" id="853663"/>
<dbReference type="KEGG" id="sce:YKL217W"/>
<dbReference type="AGR" id="SGD:S000001700"/>
<dbReference type="SGD" id="S000001700">
    <property type="gene designation" value="JEN1"/>
</dbReference>
<dbReference type="VEuPathDB" id="FungiDB:YKL217W"/>
<dbReference type="eggNOG" id="ENOG502QPK1">
    <property type="taxonomic scope" value="Eukaryota"/>
</dbReference>
<dbReference type="HOGENOM" id="CLU_001265_46_1_1"/>
<dbReference type="InParanoid" id="P36035"/>
<dbReference type="OMA" id="ILWFSVC"/>
<dbReference type="OrthoDB" id="5296287at2759"/>
<dbReference type="BioCyc" id="YEAST:G3O-31974-MONOMER"/>
<dbReference type="BioGRID-ORCS" id="853663">
    <property type="hits" value="0 hits in 10 CRISPR screens"/>
</dbReference>
<dbReference type="PRO" id="PR:P36035"/>
<dbReference type="Proteomes" id="UP000002311">
    <property type="component" value="Chromosome XI"/>
</dbReference>
<dbReference type="RNAct" id="P36035">
    <property type="molecule type" value="protein"/>
</dbReference>
<dbReference type="GO" id="GO:0071944">
    <property type="term" value="C:cell periphery"/>
    <property type="evidence" value="ECO:0007005"/>
    <property type="project" value="SGD"/>
</dbReference>
<dbReference type="GO" id="GO:0000324">
    <property type="term" value="C:fungal-type vacuole"/>
    <property type="evidence" value="ECO:0007005"/>
    <property type="project" value="SGD"/>
</dbReference>
<dbReference type="GO" id="GO:0005739">
    <property type="term" value="C:mitochondrion"/>
    <property type="evidence" value="ECO:0007005"/>
    <property type="project" value="SGD"/>
</dbReference>
<dbReference type="GO" id="GO:0005886">
    <property type="term" value="C:plasma membrane"/>
    <property type="evidence" value="ECO:0000314"/>
    <property type="project" value="SGD"/>
</dbReference>
<dbReference type="GO" id="GO:0046943">
    <property type="term" value="F:carboxylic acid transmembrane transporter activity"/>
    <property type="evidence" value="ECO:0000318"/>
    <property type="project" value="GO_Central"/>
</dbReference>
<dbReference type="GO" id="GO:0097079">
    <property type="term" value="F:selenite:proton symporter activity"/>
    <property type="evidence" value="ECO:0000315"/>
    <property type="project" value="SGD"/>
</dbReference>
<dbReference type="GO" id="GO:0015136">
    <property type="term" value="F:sialic acid transmembrane transporter activity"/>
    <property type="evidence" value="ECO:0007669"/>
    <property type="project" value="InterPro"/>
</dbReference>
<dbReference type="GO" id="GO:0035879">
    <property type="term" value="P:plasma membrane lactate transport"/>
    <property type="evidence" value="ECO:0000315"/>
    <property type="project" value="SGD"/>
</dbReference>
<dbReference type="GO" id="GO:0006849">
    <property type="term" value="P:plasma membrane pyruvate transport"/>
    <property type="evidence" value="ECO:0000315"/>
    <property type="project" value="SGD"/>
</dbReference>
<dbReference type="GO" id="GO:0097080">
    <property type="term" value="P:plasma membrane selenite transport"/>
    <property type="evidence" value="ECO:0000315"/>
    <property type="project" value="SGD"/>
</dbReference>
<dbReference type="CDD" id="cd17316">
    <property type="entry name" value="MFS_SV2_like"/>
    <property type="match status" value="1"/>
</dbReference>
<dbReference type="FunFam" id="1.20.1250.20:FF:000430">
    <property type="entry name" value="Jen1p"/>
    <property type="match status" value="1"/>
</dbReference>
<dbReference type="Gene3D" id="1.20.1250.20">
    <property type="entry name" value="MFS general substrate transporter like domains"/>
    <property type="match status" value="1"/>
</dbReference>
<dbReference type="InterPro" id="IPR020846">
    <property type="entry name" value="MFS_dom"/>
</dbReference>
<dbReference type="InterPro" id="IPR005828">
    <property type="entry name" value="MFS_sugar_transport-like"/>
</dbReference>
<dbReference type="InterPro" id="IPR036259">
    <property type="entry name" value="MFS_trans_sf"/>
</dbReference>
<dbReference type="InterPro" id="IPR004742">
    <property type="entry name" value="SA_transporter"/>
</dbReference>
<dbReference type="NCBIfam" id="TIGR00891">
    <property type="entry name" value="2A0112"/>
    <property type="match status" value="1"/>
</dbReference>
<dbReference type="PANTHER" id="PTHR23508">
    <property type="entry name" value="CARBOXYLIC ACID TRANSPORTER PROTEIN HOMOLOG"/>
    <property type="match status" value="1"/>
</dbReference>
<dbReference type="PANTHER" id="PTHR23508:SF10">
    <property type="entry name" value="CARBOXYLIC ACID TRANSPORTER PROTEIN HOMOLOG"/>
    <property type="match status" value="1"/>
</dbReference>
<dbReference type="Pfam" id="PF00083">
    <property type="entry name" value="Sugar_tr"/>
    <property type="match status" value="1"/>
</dbReference>
<dbReference type="SUPFAM" id="SSF103473">
    <property type="entry name" value="MFS general substrate transporter"/>
    <property type="match status" value="1"/>
</dbReference>
<dbReference type="PROSITE" id="PS50850">
    <property type="entry name" value="MFS"/>
    <property type="match status" value="1"/>
</dbReference>
<gene>
    <name type="primary">JEN1</name>
    <name type="ordered locus">YKL217W</name>
</gene>
<reference key="1">
    <citation type="submission" date="1995-04" db="EMBL/GenBank/DDBJ databases">
        <authorList>
            <person name="Davis E.S."/>
            <person name="Brennan M.B."/>
        </authorList>
    </citation>
    <scope>NUCLEOTIDE SEQUENCE [GENOMIC DNA]</scope>
    <source>
        <strain>ATCC 204510 / AB320</strain>
    </source>
</reference>
<reference key="2">
    <citation type="journal article" date="1994" name="Yeast">
        <title>The complete sequencing of a 24.6 kb segment of yeast chromosome XI identified the known loci URA1, SAC1 and TRP3, and revealed 6 new open reading frames including homologues to the threonine dehydratases, membrane transporters, hydantoinases and the phospholipase A2-activating protein.</title>
        <authorList>
            <person name="Tzermia M."/>
            <person name="Horaitis O."/>
            <person name="Alexandraki D."/>
        </authorList>
    </citation>
    <scope>NUCLEOTIDE SEQUENCE [GENOMIC DNA]</scope>
    <source>
        <strain>ATCC 204508 / S288c</strain>
    </source>
</reference>
<reference key="3">
    <citation type="journal article" date="1994" name="Nature">
        <title>Complete DNA sequence of yeast chromosome XI.</title>
        <authorList>
            <person name="Dujon B."/>
            <person name="Alexandraki D."/>
            <person name="Andre B."/>
            <person name="Ansorge W."/>
            <person name="Baladron V."/>
            <person name="Ballesta J.P.G."/>
            <person name="Banrevi A."/>
            <person name="Bolle P.-A."/>
            <person name="Bolotin-Fukuhara M."/>
            <person name="Bossier P."/>
            <person name="Bou G."/>
            <person name="Boyer J."/>
            <person name="Buitrago M.J."/>
            <person name="Cheret G."/>
            <person name="Colleaux L."/>
            <person name="Daignan-Fornier B."/>
            <person name="del Rey F."/>
            <person name="Dion C."/>
            <person name="Domdey H."/>
            <person name="Duesterhoeft A."/>
            <person name="Duesterhus S."/>
            <person name="Entian K.-D."/>
            <person name="Erfle H."/>
            <person name="Esteban P.F."/>
            <person name="Feldmann H."/>
            <person name="Fernandes L."/>
            <person name="Fobo G.M."/>
            <person name="Fritz C."/>
            <person name="Fukuhara H."/>
            <person name="Gabel C."/>
            <person name="Gaillon L."/>
            <person name="Garcia-Cantalejo J.M."/>
            <person name="Garcia-Ramirez J.J."/>
            <person name="Gent M.E."/>
            <person name="Ghazvini M."/>
            <person name="Goffeau A."/>
            <person name="Gonzalez A."/>
            <person name="Grothues D."/>
            <person name="Guerreiro P."/>
            <person name="Hegemann J.H."/>
            <person name="Hewitt N."/>
            <person name="Hilger F."/>
            <person name="Hollenberg C.P."/>
            <person name="Horaitis O."/>
            <person name="Indge K.J."/>
            <person name="Jacquier A."/>
            <person name="James C.M."/>
            <person name="Jauniaux J.-C."/>
            <person name="Jimenez A."/>
            <person name="Keuchel H."/>
            <person name="Kirchrath L."/>
            <person name="Kleine K."/>
            <person name="Koetter P."/>
            <person name="Legrain P."/>
            <person name="Liebl S."/>
            <person name="Louis E.J."/>
            <person name="Maia e Silva A."/>
            <person name="Marck C."/>
            <person name="Monnier A.-L."/>
            <person name="Moestl D."/>
            <person name="Mueller S."/>
            <person name="Obermaier B."/>
            <person name="Oliver S.G."/>
            <person name="Pallier C."/>
            <person name="Pascolo S."/>
            <person name="Pfeiffer F."/>
            <person name="Philippsen P."/>
            <person name="Planta R.J."/>
            <person name="Pohl F.M."/>
            <person name="Pohl T.M."/>
            <person name="Poehlmann R."/>
            <person name="Portetelle D."/>
            <person name="Purnelle B."/>
            <person name="Puzos V."/>
            <person name="Ramezani Rad M."/>
            <person name="Rasmussen S.W."/>
            <person name="Remacha M.A."/>
            <person name="Revuelta J.L."/>
            <person name="Richard G.-F."/>
            <person name="Rieger M."/>
            <person name="Rodrigues-Pousada C."/>
            <person name="Rose M."/>
            <person name="Rupp T."/>
            <person name="Santos M.A."/>
            <person name="Schwager C."/>
            <person name="Sensen C."/>
            <person name="Skala J."/>
            <person name="Soares H."/>
            <person name="Sor F."/>
            <person name="Stegemann J."/>
            <person name="Tettelin H."/>
            <person name="Thierry A."/>
            <person name="Tzermia M."/>
            <person name="Urrestarazu L.A."/>
            <person name="van Dyck L."/>
            <person name="van Vliet-Reedijk J.C."/>
            <person name="Valens M."/>
            <person name="Vandenbol M."/>
            <person name="Vilela C."/>
            <person name="Vissers S."/>
            <person name="von Wettstein D."/>
            <person name="Voss H."/>
            <person name="Wiemann S."/>
            <person name="Xu G."/>
            <person name="Zimmermann J."/>
            <person name="Haasemann M."/>
            <person name="Becker I."/>
            <person name="Mewes H.-W."/>
        </authorList>
    </citation>
    <scope>NUCLEOTIDE SEQUENCE [LARGE SCALE GENOMIC DNA]</scope>
    <source>
        <strain>ATCC 204508 / S288c</strain>
    </source>
</reference>
<reference key="4">
    <citation type="journal article" date="2014" name="G3 (Bethesda)">
        <title>The reference genome sequence of Saccharomyces cerevisiae: Then and now.</title>
        <authorList>
            <person name="Engel S.R."/>
            <person name="Dietrich F.S."/>
            <person name="Fisk D.G."/>
            <person name="Binkley G."/>
            <person name="Balakrishnan R."/>
            <person name="Costanzo M.C."/>
            <person name="Dwight S.S."/>
            <person name="Hitz B.C."/>
            <person name="Karra K."/>
            <person name="Nash R.S."/>
            <person name="Weng S."/>
            <person name="Wong E.D."/>
            <person name="Lloyd P."/>
            <person name="Skrzypek M.S."/>
            <person name="Miyasato S.R."/>
            <person name="Simison M."/>
            <person name="Cherry J.M."/>
        </authorList>
    </citation>
    <scope>GENOME REANNOTATION</scope>
    <source>
        <strain>ATCC 204508 / S288c</strain>
    </source>
</reference>
<reference key="5">
    <citation type="journal article" date="2003" name="Nat. Biotechnol.">
        <title>A proteomics approach to understanding protein ubiquitination.</title>
        <authorList>
            <person name="Peng J."/>
            <person name="Schwartz D."/>
            <person name="Elias J.E."/>
            <person name="Thoreen C.C."/>
            <person name="Cheng D."/>
            <person name="Marsischky G."/>
            <person name="Roelofs J."/>
            <person name="Finley D."/>
            <person name="Gygi S.P."/>
        </authorList>
    </citation>
    <scope>UBIQUITINATION [LARGE SCALE ANALYSIS] AT LYS-9 AND LYS-338</scope>
    <scope>ACETYLATION [LARGE SCALE ANALYSIS] AT SER-2</scope>
    <scope>IDENTIFICATION BY MASS SPECTROMETRY</scope>
    <source>
        <strain>SUB592</strain>
    </source>
</reference>
<reference key="6">
    <citation type="journal article" date="2006" name="Proc. Natl. Acad. Sci. U.S.A.">
        <title>A global topology map of the Saccharomyces cerevisiae membrane proteome.</title>
        <authorList>
            <person name="Kim H."/>
            <person name="Melen K."/>
            <person name="Oesterberg M."/>
            <person name="von Heijne G."/>
        </authorList>
    </citation>
    <scope>TOPOLOGY [LARGE SCALE ANALYSIS]</scope>
    <source>
        <strain>ATCC 208353 / W303-1A</strain>
    </source>
</reference>
<reference key="7">
    <citation type="journal article" date="2007" name="Mol. Cell. Proteomics">
        <title>Profiling phosphoproteins of yeast mitochondria reveals a role of phosphorylation in assembly of the ATP synthase.</title>
        <authorList>
            <person name="Reinders J."/>
            <person name="Wagner K."/>
            <person name="Zahedi R.P."/>
            <person name="Stojanovski D."/>
            <person name="Eyrich B."/>
            <person name="van der Laan M."/>
            <person name="Rehling P."/>
            <person name="Sickmann A."/>
            <person name="Pfanner N."/>
            <person name="Meisinger C."/>
        </authorList>
    </citation>
    <scope>ACETYLATION [LARGE SCALE ANALYSIS] AT SER-2</scope>
    <scope>PHOSPHORYLATION [LARGE SCALE ANALYSIS] AT SER-4; SER-11; SER-584 AND SER-606</scope>
    <scope>CLEAVAGE OF INITIATOR METHIONINE [LARGE SCALE ANALYSIS]</scope>
    <scope>IDENTIFICATION BY MASS SPECTROMETRY [LARGE SCALE ANALYSIS]</scope>
    <source>
        <strain>ATCC 76625 / YPH499</strain>
    </source>
</reference>
<reference key="8">
    <citation type="journal article" date="2009" name="Science">
        <title>Global analysis of Cdk1 substrate phosphorylation sites provides insights into evolution.</title>
        <authorList>
            <person name="Holt L.J."/>
            <person name="Tuch B.B."/>
            <person name="Villen J."/>
            <person name="Johnson A.D."/>
            <person name="Gygi S.P."/>
            <person name="Morgan D.O."/>
        </authorList>
    </citation>
    <scope>PHOSPHORYLATION [LARGE SCALE ANALYSIS] AT SER-61; SER-66; THR-70; SER-603 AND SER-606</scope>
    <scope>IDENTIFICATION BY MASS SPECTROMETRY [LARGE SCALE ANALYSIS]</scope>
</reference>
<reference key="9">
    <citation type="journal article" date="2012" name="Proc. Natl. Acad. Sci. U.S.A.">
        <title>N-terminal acetylome analyses and functional insights of the N-terminal acetyltransferase NatB.</title>
        <authorList>
            <person name="Van Damme P."/>
            <person name="Lasa M."/>
            <person name="Polevoda B."/>
            <person name="Gazquez C."/>
            <person name="Elosegui-Artola A."/>
            <person name="Kim D.S."/>
            <person name="De Juan-Pardo E."/>
            <person name="Demeyer K."/>
            <person name="Hole K."/>
            <person name="Larrea E."/>
            <person name="Timmerman E."/>
            <person name="Prieto J."/>
            <person name="Arnesen T."/>
            <person name="Sherman F."/>
            <person name="Gevaert K."/>
            <person name="Aldabe R."/>
        </authorList>
    </citation>
    <scope>ACETYLATION [LARGE SCALE ANALYSIS] AT SER-2</scope>
    <scope>CLEAVAGE OF INITIATOR METHIONINE [LARGE SCALE ANALYSIS]</scope>
    <scope>IDENTIFICATION BY MASS SPECTROMETRY [LARGE SCALE ANALYSIS]</scope>
</reference>
<proteinExistence type="evidence at protein level"/>
<feature type="initiator methionine" description="Removed" evidence="3 5 7">
    <location>
        <position position="1"/>
    </location>
</feature>
<feature type="chain" id="PRO_0000050460" description="Carboxylic acid transporter protein homolog">
    <location>
        <begin position="2"/>
        <end position="616"/>
    </location>
</feature>
<feature type="topological domain" description="Cytoplasmic" evidence="1">
    <location>
        <begin position="2"/>
        <end position="140"/>
    </location>
</feature>
<feature type="transmembrane region" description="Helical; Name=1" evidence="1">
    <location>
        <begin position="141"/>
        <end position="161"/>
    </location>
</feature>
<feature type="topological domain" description="Extracellular" evidence="1">
    <location>
        <begin position="162"/>
        <end position="176"/>
    </location>
</feature>
<feature type="transmembrane region" description="Helical; Name=2" evidence="1">
    <location>
        <begin position="177"/>
        <end position="197"/>
    </location>
</feature>
<feature type="topological domain" description="Cytoplasmic" evidence="1">
    <location>
        <begin position="198"/>
        <end position="205"/>
    </location>
</feature>
<feature type="transmembrane region" description="Helical; Name=3" evidence="1">
    <location>
        <begin position="206"/>
        <end position="226"/>
    </location>
</feature>
<feature type="topological domain" description="Extracellular" evidence="1">
    <location>
        <begin position="227"/>
        <end position="230"/>
    </location>
</feature>
<feature type="transmembrane region" description="Helical; Name=4" evidence="1">
    <location>
        <begin position="231"/>
        <end position="251"/>
    </location>
</feature>
<feature type="topological domain" description="Cytoplasmic" evidence="1">
    <location>
        <begin position="252"/>
        <end position="263"/>
    </location>
</feature>
<feature type="transmembrane region" description="Helical; Name=5" evidence="1">
    <location>
        <begin position="264"/>
        <end position="284"/>
    </location>
</feature>
<feature type="topological domain" description="Extracellular" evidence="1">
    <location>
        <begin position="285"/>
        <end position="296"/>
    </location>
</feature>
<feature type="transmembrane region" description="Helical; Name=6" evidence="1">
    <location>
        <begin position="297"/>
        <end position="317"/>
    </location>
</feature>
<feature type="topological domain" description="Cytoplasmic" evidence="1">
    <location>
        <begin position="318"/>
        <end position="363"/>
    </location>
</feature>
<feature type="transmembrane region" description="Helical; Name=7" evidence="1">
    <location>
        <begin position="364"/>
        <end position="384"/>
    </location>
</feature>
<feature type="topological domain" description="Extracellular" evidence="1">
    <location>
        <begin position="385"/>
        <end position="402"/>
    </location>
</feature>
<feature type="transmembrane region" description="Helical; Name=8" evidence="1">
    <location>
        <begin position="403"/>
        <end position="423"/>
    </location>
</feature>
<feature type="topological domain" description="Cytoplasmic" evidence="1">
    <location>
        <begin position="424"/>
        <end position="432"/>
    </location>
</feature>
<feature type="transmembrane region" description="Helical; Name=9" evidence="1">
    <location>
        <begin position="433"/>
        <end position="453"/>
    </location>
</feature>
<feature type="topological domain" description="Extracellular" evidence="1">
    <location>
        <begin position="454"/>
        <end position="457"/>
    </location>
</feature>
<feature type="transmembrane region" description="Helical; Name=10" evidence="1">
    <location>
        <begin position="458"/>
        <end position="478"/>
    </location>
</feature>
<feature type="topological domain" description="Cytoplasmic" evidence="1">
    <location>
        <begin position="479"/>
        <end position="489"/>
    </location>
</feature>
<feature type="transmembrane region" description="Helical; Name=11" evidence="1">
    <location>
        <begin position="490"/>
        <end position="510"/>
    </location>
</feature>
<feature type="topological domain" description="Extracellular" evidence="1">
    <location>
        <begin position="511"/>
        <end position="535"/>
    </location>
</feature>
<feature type="transmembrane region" description="Helical; Name=12" evidence="1">
    <location>
        <begin position="536"/>
        <end position="556"/>
    </location>
</feature>
<feature type="topological domain" description="Cytoplasmic" evidence="1">
    <location>
        <begin position="557"/>
        <end position="616"/>
    </location>
</feature>
<feature type="region of interest" description="Disordered" evidence="2">
    <location>
        <begin position="1"/>
        <end position="65"/>
    </location>
</feature>
<feature type="compositionally biased region" description="Basic and acidic residues" evidence="2">
    <location>
        <begin position="1"/>
        <end position="11"/>
    </location>
</feature>
<feature type="modified residue" description="N-acetylserine" evidence="5 7">
    <location>
        <position position="2"/>
    </location>
</feature>
<feature type="modified residue" description="Phosphoserine" evidence="5">
    <location>
        <position position="4"/>
    </location>
</feature>
<feature type="modified residue" description="Phosphoserine" evidence="5">
    <location>
        <position position="11"/>
    </location>
</feature>
<feature type="modified residue" description="Phosphoserine" evidence="6">
    <location>
        <position position="61"/>
    </location>
</feature>
<feature type="modified residue" description="Phosphoserine" evidence="6">
    <location>
        <position position="66"/>
    </location>
</feature>
<feature type="modified residue" description="Phosphothreonine" evidence="6">
    <location>
        <position position="70"/>
    </location>
</feature>
<feature type="modified residue" description="Phosphoserine" evidence="5">
    <location>
        <position position="584"/>
    </location>
</feature>
<feature type="modified residue" description="Phosphoserine" evidence="6">
    <location>
        <position position="603"/>
    </location>
</feature>
<feature type="modified residue" description="Phosphoserine" evidence="5 6">
    <location>
        <position position="606"/>
    </location>
</feature>
<feature type="cross-link" description="Glycyl lysine isopeptide (Lys-Gly) (interchain with G-Cter in ubiquitin)" evidence="3">
    <location>
        <position position="9"/>
    </location>
</feature>
<feature type="cross-link" description="Glycyl lysine isopeptide (Lys-Gly) (interchain with G-Cter in ubiquitin)" evidence="3">
    <location>
        <position position="338"/>
    </location>
</feature>
<sequence>MSSSITDEKISGEQQQPAGRKLYYNTSTFAEPPLVDGEGNPINYEPEVYNPDHEKLYHNPSLPAQSIQDTRDDELLERVYSQDQGVEYEEDEEDKPNLSAASIKSYALTRFTSLLHIHEFSWENVNPIPELRKMTWQNWNYFFMGYFAWLSAAWAFFCVSVSVAPLAELYDRPTKDITWGLGLVLFVRSAGAVIFGLWTDKSSRKWPYITCLFLFVIAQLCTPWCDTYEKFLGVRWITGIAMGGIYGCASATAIEDAPVKARSFLSGLFFSAYAMGFIFAIIFYRAFGYFRDDGWKILFWFSIFLPILLIFWRLLWPETKYFTKVLKARKLILSDAVKANGGEPLPKANFKQKMVSMKRTVQKYWLLFAYLVVLLVGPNYLTHASQDLLPTMLRAQLGLSKDAVTVIVVVTNIGAICGGMIFGQFMEVTGRRLGLLIACTMGGCFTYPAFMLRSEKAILGAGFMLYFCVFGVWGILPIHLAELAPADARALVAGLSYQLGNLASAAASTIETQLADRYPLERDASGAVIKEDYAKVMAILTGSVFIFTFACVFVGHEKFHRDLSSPVMKKYINQVEEYEADGLSISDIVEQKTECASVKMIDSNVSKTYEEHIETV</sequence>
<organism>
    <name type="scientific">Saccharomyces cerevisiae (strain ATCC 204508 / S288c)</name>
    <name type="common">Baker's yeast</name>
    <dbReference type="NCBI Taxonomy" id="559292"/>
    <lineage>
        <taxon>Eukaryota</taxon>
        <taxon>Fungi</taxon>
        <taxon>Dikarya</taxon>
        <taxon>Ascomycota</taxon>
        <taxon>Saccharomycotina</taxon>
        <taxon>Saccharomycetes</taxon>
        <taxon>Saccharomycetales</taxon>
        <taxon>Saccharomycetaceae</taxon>
        <taxon>Saccharomyces</taxon>
    </lineage>
</organism>
<comment type="function">
    <text>Essential to lactate transport.</text>
</comment>
<comment type="subcellular location">
    <subcellularLocation>
        <location>Membrane</location>
        <topology>Multi-pass membrane protein</topology>
    </subcellularLocation>
</comment>
<comment type="similarity">
    <text evidence="4">Belongs to the major facilitator superfamily. Sugar transporter (TC 2.A.1.1) family.</text>
</comment>